<sequence>MMSGRMNAAGDESPFPFGAMQAPGPGAYVGFDHGAAAVAAAAAAAQRAGMLQHHHHHMYDGLDFAAAMQFGGGQDAPPHPQLLALPPSMAAPPPPPMPMPLQMPMTMPMPGDVYPALGIVKREGGGGGQDAAAGRIGLNLGRRTYFSPGDMLAVDRLLMRSRLGGVFGLGFGGAHHQPPRCQAEGCKADLSGAKHYHRRHKVCEYHAKASVVAASGKQQRFCQQCSRFHVLTEFDEAKRSCRKRLAEHNRRRRKPAAAATTAVAAAKDAAAAPVAAGKKPSGGAATSYTGDNKNVVSMSAAKSPISSNTSVISCLPEQGKHAAAAARPTALTLGGAPPHESSAPQIGAMLHHHHHHQQDHMQVSSLVHINGGGGGGSNNILSCSSVCSSALPSTATNGEVSDQNNDNSHNNGGNNNNMHLFEVDFM</sequence>
<comment type="function">
    <text evidence="1">Trans-acting factor that binds specifically to the consensus nucleotide sequence 5'-TNCGTACAA-3'.</text>
</comment>
<comment type="subcellular location">
    <subcellularLocation>
        <location evidence="6">Nucleus</location>
    </subcellularLocation>
</comment>
<comment type="tissue specificity">
    <text evidence="5">Expressed in stems, leaf sheaths, and young panicles.</text>
</comment>
<comment type="domain">
    <text evidence="1">The SBP-type zinc finger is required for the binding to DNA.</text>
</comment>
<comment type="sequence caution" evidence="6">
    <conflict type="erroneous gene model prediction">
        <sequence resource="EMBL-CDS" id="BAD38344"/>
    </conflict>
</comment>
<organism>
    <name type="scientific">Oryza sativa subsp. japonica</name>
    <name type="common">Rice</name>
    <dbReference type="NCBI Taxonomy" id="39947"/>
    <lineage>
        <taxon>Eukaryota</taxon>
        <taxon>Viridiplantae</taxon>
        <taxon>Streptophyta</taxon>
        <taxon>Embryophyta</taxon>
        <taxon>Tracheophyta</taxon>
        <taxon>Spermatophyta</taxon>
        <taxon>Magnoliopsida</taxon>
        <taxon>Liliopsida</taxon>
        <taxon>Poales</taxon>
        <taxon>Poaceae</taxon>
        <taxon>BOP clade</taxon>
        <taxon>Oryzoideae</taxon>
        <taxon>Oryzeae</taxon>
        <taxon>Oryzinae</taxon>
        <taxon>Oryza</taxon>
        <taxon>Oryza sativa</taxon>
    </lineage>
</organism>
<proteinExistence type="evidence at transcript level"/>
<reference key="1">
    <citation type="journal article" date="2005" name="Nature">
        <title>The map-based sequence of the rice genome.</title>
        <authorList>
            <consortium name="International rice genome sequencing project (IRGSP)"/>
        </authorList>
    </citation>
    <scope>NUCLEOTIDE SEQUENCE [LARGE SCALE GENOMIC DNA]</scope>
    <source>
        <strain>cv. Nipponbare</strain>
    </source>
</reference>
<reference key="2">
    <citation type="journal article" date="2008" name="Nucleic Acids Res.">
        <title>The rice annotation project database (RAP-DB): 2008 update.</title>
        <authorList>
            <consortium name="The rice annotation project (RAP)"/>
        </authorList>
    </citation>
    <scope>GENOME REANNOTATION</scope>
    <source>
        <strain>cv. Nipponbare</strain>
    </source>
</reference>
<reference key="3">
    <citation type="journal article" date="2013" name="Rice">
        <title>Improvement of the Oryza sativa Nipponbare reference genome using next generation sequence and optical map data.</title>
        <authorList>
            <person name="Kawahara Y."/>
            <person name="de la Bastide M."/>
            <person name="Hamilton J.P."/>
            <person name="Kanamori H."/>
            <person name="McCombie W.R."/>
            <person name="Ouyang S."/>
            <person name="Schwartz D.C."/>
            <person name="Tanaka T."/>
            <person name="Wu J."/>
            <person name="Zhou S."/>
            <person name="Childs K.L."/>
            <person name="Davidson R.M."/>
            <person name="Lin H."/>
            <person name="Quesada-Ocampo L."/>
            <person name="Vaillancourt B."/>
            <person name="Sakai H."/>
            <person name="Lee S.S."/>
            <person name="Kim J."/>
            <person name="Numa H."/>
            <person name="Itoh T."/>
            <person name="Buell C.R."/>
            <person name="Matsumoto T."/>
        </authorList>
    </citation>
    <scope>GENOME REANNOTATION</scope>
    <source>
        <strain>cv. Nipponbare</strain>
    </source>
</reference>
<reference key="4">
    <citation type="journal article" date="2006" name="Plant Physiol.">
        <title>Genomic organization, differential expression, and interaction of SQUAMOSA promoter-binding-like transcription factors and microRNA156 in rice.</title>
        <authorList>
            <person name="Xie K."/>
            <person name="Wu C."/>
            <person name="Xiong L."/>
        </authorList>
    </citation>
    <scope>TISSUE SPECIFICITY</scope>
    <scope>GENE FAMILY</scope>
    <scope>NOMENCLATURE</scope>
</reference>
<reference key="5">
    <citation type="journal article" date="2008" name="Gene">
        <title>Comparative study of SBP-box gene family in Arabidopsis and rice.</title>
        <authorList>
            <person name="Yang Z."/>
            <person name="Wang X."/>
            <person name="Gu S."/>
            <person name="Hu Z."/>
            <person name="Xu H."/>
            <person name="Xu C."/>
        </authorList>
    </citation>
    <scope>GENE FAMILY</scope>
</reference>
<dbReference type="EMBL" id="AP005760">
    <property type="protein sequence ID" value="BAD38344.1"/>
    <property type="status" value="ALT_SEQ"/>
    <property type="molecule type" value="Genomic_DNA"/>
</dbReference>
<dbReference type="EMBL" id="AP008212">
    <property type="protein sequence ID" value="BAF20175.1"/>
    <property type="molecule type" value="Genomic_DNA"/>
</dbReference>
<dbReference type="EMBL" id="AP014962">
    <property type="protein sequence ID" value="BAS98962.1"/>
    <property type="molecule type" value="Genomic_DNA"/>
</dbReference>
<dbReference type="RefSeq" id="XP_015642406.1">
    <property type="nucleotide sequence ID" value="XM_015786920.1"/>
</dbReference>
<dbReference type="SMR" id="Q0DAE8"/>
<dbReference type="FunCoup" id="Q0DAE8">
    <property type="interactions" value="24"/>
</dbReference>
<dbReference type="STRING" id="39947.Q0DAE8"/>
<dbReference type="PaxDb" id="39947-Q0DAE8"/>
<dbReference type="EnsemblPlants" id="Os06t0659100-01">
    <property type="protein sequence ID" value="Os06t0659100-01"/>
    <property type="gene ID" value="Os06g0659100"/>
</dbReference>
<dbReference type="Gramene" id="Os06t0659100-01">
    <property type="protein sequence ID" value="Os06t0659100-01"/>
    <property type="gene ID" value="Os06g0659100"/>
</dbReference>
<dbReference type="KEGG" id="dosa:Os06g0659100"/>
<dbReference type="eggNOG" id="ENOG502QWHY">
    <property type="taxonomic scope" value="Eukaryota"/>
</dbReference>
<dbReference type="HOGENOM" id="CLU_053048_1_0_1"/>
<dbReference type="InParanoid" id="Q0DAE8"/>
<dbReference type="OMA" id="GNGNMHN"/>
<dbReference type="OrthoDB" id="514967at2759"/>
<dbReference type="Proteomes" id="UP000000763">
    <property type="component" value="Chromosome 6"/>
</dbReference>
<dbReference type="Proteomes" id="UP000059680">
    <property type="component" value="Chromosome 6"/>
</dbReference>
<dbReference type="GO" id="GO:0005634">
    <property type="term" value="C:nucleus"/>
    <property type="evidence" value="ECO:0007669"/>
    <property type="project" value="UniProtKB-SubCell"/>
</dbReference>
<dbReference type="GO" id="GO:0003677">
    <property type="term" value="F:DNA binding"/>
    <property type="evidence" value="ECO:0007669"/>
    <property type="project" value="UniProtKB-KW"/>
</dbReference>
<dbReference type="GO" id="GO:0008270">
    <property type="term" value="F:zinc ion binding"/>
    <property type="evidence" value="ECO:0007669"/>
    <property type="project" value="UniProtKB-KW"/>
</dbReference>
<dbReference type="FunFam" id="4.10.1100.10:FF:000001">
    <property type="entry name" value="Squamosa promoter-binding-like protein 14"/>
    <property type="match status" value="1"/>
</dbReference>
<dbReference type="Gene3D" id="4.10.1100.10">
    <property type="entry name" value="Transcription factor, SBP-box domain"/>
    <property type="match status" value="1"/>
</dbReference>
<dbReference type="InterPro" id="IPR044817">
    <property type="entry name" value="SBP-like"/>
</dbReference>
<dbReference type="InterPro" id="IPR004333">
    <property type="entry name" value="SBP_dom"/>
</dbReference>
<dbReference type="InterPro" id="IPR036893">
    <property type="entry name" value="SBP_sf"/>
</dbReference>
<dbReference type="PANTHER" id="PTHR31251:SF114">
    <property type="entry name" value="SQUAMOSA PROMOTER-BINDING-LIKE PROTEIN 10"/>
    <property type="match status" value="1"/>
</dbReference>
<dbReference type="PANTHER" id="PTHR31251">
    <property type="entry name" value="SQUAMOSA PROMOTER-BINDING-LIKE PROTEIN 4"/>
    <property type="match status" value="1"/>
</dbReference>
<dbReference type="Pfam" id="PF03110">
    <property type="entry name" value="SBP"/>
    <property type="match status" value="1"/>
</dbReference>
<dbReference type="SUPFAM" id="SSF103612">
    <property type="entry name" value="SBT domain"/>
    <property type="match status" value="1"/>
</dbReference>
<dbReference type="PROSITE" id="PS51141">
    <property type="entry name" value="ZF_SBP"/>
    <property type="match status" value="1"/>
</dbReference>
<keyword id="KW-0238">DNA-binding</keyword>
<keyword id="KW-0479">Metal-binding</keyword>
<keyword id="KW-0539">Nucleus</keyword>
<keyword id="KW-1185">Reference proteome</keyword>
<keyword id="KW-0804">Transcription</keyword>
<keyword id="KW-0805">Transcription regulation</keyword>
<keyword id="KW-0862">Zinc</keyword>
<keyword id="KW-0863">Zinc-finger</keyword>
<accession>Q0DAE8</accession>
<accession>A0A0P0WZN2</accession>
<accession>Q67U27</accession>
<gene>
    <name type="primary">SPL10</name>
    <name type="ordered locus">Os06g0659100</name>
    <name type="ordered locus">LOC_Os06g44860</name>
    <name type="ORF">B1047G05.25</name>
</gene>
<name>SPL10_ORYSJ</name>
<protein>
    <recommendedName>
        <fullName>Squamosa promoter-binding-like protein 10</fullName>
    </recommendedName>
</protein>
<feature type="chain" id="PRO_0000308235" description="Squamosa promoter-binding-like protein 10">
    <location>
        <begin position="1"/>
        <end position="426"/>
    </location>
</feature>
<feature type="zinc finger region" description="SBP-type" evidence="3">
    <location>
        <begin position="178"/>
        <end position="255"/>
    </location>
</feature>
<feature type="region of interest" description="Disordered" evidence="4">
    <location>
        <begin position="268"/>
        <end position="290"/>
    </location>
</feature>
<feature type="region of interest" description="Disordered" evidence="4">
    <location>
        <begin position="392"/>
        <end position="426"/>
    </location>
</feature>
<feature type="short sequence motif" description="Bipartite nuclear localization signal" evidence="2">
    <location>
        <begin position="238"/>
        <end position="254"/>
    </location>
</feature>
<feature type="compositionally biased region" description="Low complexity" evidence="4">
    <location>
        <begin position="268"/>
        <end position="287"/>
    </location>
</feature>
<feature type="compositionally biased region" description="Low complexity" evidence="4">
    <location>
        <begin position="401"/>
        <end position="417"/>
    </location>
</feature>
<feature type="binding site" evidence="3">
    <location>
        <position position="181"/>
    </location>
    <ligand>
        <name>Zn(2+)</name>
        <dbReference type="ChEBI" id="CHEBI:29105"/>
        <label>1</label>
    </ligand>
</feature>
<feature type="binding site" evidence="3">
    <location>
        <position position="186"/>
    </location>
    <ligand>
        <name>Zn(2+)</name>
        <dbReference type="ChEBI" id="CHEBI:29105"/>
        <label>1</label>
    </ligand>
</feature>
<feature type="binding site" evidence="3">
    <location>
        <position position="203"/>
    </location>
    <ligand>
        <name>Zn(2+)</name>
        <dbReference type="ChEBI" id="CHEBI:29105"/>
        <label>1</label>
    </ligand>
</feature>
<feature type="binding site" evidence="3">
    <location>
        <position position="206"/>
    </location>
    <ligand>
        <name>Zn(2+)</name>
        <dbReference type="ChEBI" id="CHEBI:29105"/>
        <label>1</label>
    </ligand>
</feature>
<feature type="binding site" evidence="3">
    <location>
        <position position="222"/>
    </location>
    <ligand>
        <name>Zn(2+)</name>
        <dbReference type="ChEBI" id="CHEBI:29105"/>
        <label>2</label>
    </ligand>
</feature>
<feature type="binding site" evidence="3">
    <location>
        <position position="225"/>
    </location>
    <ligand>
        <name>Zn(2+)</name>
        <dbReference type="ChEBI" id="CHEBI:29105"/>
        <label>2</label>
    </ligand>
</feature>
<feature type="binding site" evidence="3">
    <location>
        <position position="229"/>
    </location>
    <ligand>
        <name>Zn(2+)</name>
        <dbReference type="ChEBI" id="CHEBI:29105"/>
        <label>2</label>
    </ligand>
</feature>
<feature type="binding site" evidence="3">
    <location>
        <position position="241"/>
    </location>
    <ligand>
        <name>Zn(2+)</name>
        <dbReference type="ChEBI" id="CHEBI:29105"/>
        <label>2</label>
    </ligand>
</feature>
<evidence type="ECO:0000250" key="1"/>
<evidence type="ECO:0000255" key="2"/>
<evidence type="ECO:0000255" key="3">
    <source>
        <dbReference type="PROSITE-ProRule" id="PRU00470"/>
    </source>
</evidence>
<evidence type="ECO:0000256" key="4">
    <source>
        <dbReference type="SAM" id="MobiDB-lite"/>
    </source>
</evidence>
<evidence type="ECO:0000269" key="5">
    <source>
    </source>
</evidence>
<evidence type="ECO:0000305" key="6"/>